<dbReference type="EMBL" id="BC084148">
    <property type="protein sequence ID" value="AAH84148.1"/>
    <property type="molecule type" value="mRNA"/>
</dbReference>
<dbReference type="RefSeq" id="NP_001011041.1">
    <property type="nucleotide sequence ID" value="NM_001011041.1"/>
</dbReference>
<dbReference type="PDB" id="7Y5G">
    <property type="method" value="EM"/>
    <property type="resolution" value="3.85 A"/>
    <property type="chains" value="A/B=1-374"/>
</dbReference>
<dbReference type="PDB" id="7Y5H">
    <property type="method" value="EM"/>
    <property type="resolution" value="3.72 A"/>
    <property type="chains" value="A/B=1-374"/>
</dbReference>
<dbReference type="PDBsum" id="7Y5G"/>
<dbReference type="PDBsum" id="7Y5H"/>
<dbReference type="EMDB" id="EMD-33619"/>
<dbReference type="EMDB" id="EMD-33620"/>
<dbReference type="SMR" id="Q5XHB4"/>
<dbReference type="FunCoup" id="Q5XHB4">
    <property type="interactions" value="39"/>
</dbReference>
<dbReference type="STRING" id="8364.ENSXETP00000034691"/>
<dbReference type="GeneID" id="496450"/>
<dbReference type="KEGG" id="xtr:496450"/>
<dbReference type="AGR" id="Xenbase:XB-GENE-958127"/>
<dbReference type="CTD" id="169026"/>
<dbReference type="Xenbase" id="XB-GENE-958127">
    <property type="gene designation" value="slc30a8"/>
</dbReference>
<dbReference type="InParanoid" id="Q5XHB4"/>
<dbReference type="OMA" id="RATKMYA"/>
<dbReference type="OrthoDB" id="9944568at2759"/>
<dbReference type="Reactome" id="R-XTR-264876">
    <property type="pathway name" value="Insulin processing"/>
</dbReference>
<dbReference type="Reactome" id="R-XTR-435368">
    <property type="pathway name" value="Zinc efflux and compartmentalization by the SLC30 family"/>
</dbReference>
<dbReference type="Proteomes" id="UP000008143">
    <property type="component" value="Chromosome 6"/>
</dbReference>
<dbReference type="GO" id="GO:0005886">
    <property type="term" value="C:plasma membrane"/>
    <property type="evidence" value="ECO:0007669"/>
    <property type="project" value="UniProtKB-SubCell"/>
</dbReference>
<dbReference type="GO" id="GO:0030667">
    <property type="term" value="C:secretory granule membrane"/>
    <property type="evidence" value="ECO:0000250"/>
    <property type="project" value="UniProtKB"/>
</dbReference>
<dbReference type="GO" id="GO:0030658">
    <property type="term" value="C:transport vesicle membrane"/>
    <property type="evidence" value="ECO:0007669"/>
    <property type="project" value="UniProtKB-SubCell"/>
</dbReference>
<dbReference type="GO" id="GO:0046872">
    <property type="term" value="F:metal ion binding"/>
    <property type="evidence" value="ECO:0007669"/>
    <property type="project" value="UniProtKB-KW"/>
</dbReference>
<dbReference type="GO" id="GO:0140826">
    <property type="term" value="F:zinc:proton antiporter activity"/>
    <property type="evidence" value="ECO:0000250"/>
    <property type="project" value="UniProtKB"/>
</dbReference>
<dbReference type="GO" id="GO:0062111">
    <property type="term" value="P:zinc ion import into organelle"/>
    <property type="evidence" value="ECO:0000250"/>
    <property type="project" value="UniProtKB"/>
</dbReference>
<dbReference type="FunFam" id="1.20.1510.10:FF:000002">
    <property type="entry name" value="zinc transporter 3 isoform X1"/>
    <property type="match status" value="1"/>
</dbReference>
<dbReference type="Gene3D" id="1.20.1510.10">
    <property type="entry name" value="Cation efflux protein transmembrane domain"/>
    <property type="match status" value="1"/>
</dbReference>
<dbReference type="InterPro" id="IPR002524">
    <property type="entry name" value="Cation_efflux"/>
</dbReference>
<dbReference type="InterPro" id="IPR036837">
    <property type="entry name" value="Cation_efflux_CTD_sf"/>
</dbReference>
<dbReference type="InterPro" id="IPR027469">
    <property type="entry name" value="Cation_efflux_TMD_sf"/>
</dbReference>
<dbReference type="InterPro" id="IPR050681">
    <property type="entry name" value="CDF/SLC30A"/>
</dbReference>
<dbReference type="NCBIfam" id="TIGR01297">
    <property type="entry name" value="CDF"/>
    <property type="match status" value="1"/>
</dbReference>
<dbReference type="PANTHER" id="PTHR11562">
    <property type="entry name" value="CATION EFFLUX PROTEIN/ ZINC TRANSPORTER"/>
    <property type="match status" value="1"/>
</dbReference>
<dbReference type="PANTHER" id="PTHR11562:SF37">
    <property type="entry name" value="PROTON-COUPLED ZINC ANTIPORTER SLC30A8"/>
    <property type="match status" value="1"/>
</dbReference>
<dbReference type="Pfam" id="PF01545">
    <property type="entry name" value="Cation_efflux"/>
    <property type="match status" value="1"/>
</dbReference>
<dbReference type="SUPFAM" id="SSF160240">
    <property type="entry name" value="Cation efflux protein cytoplasmic domain-like"/>
    <property type="match status" value="1"/>
</dbReference>
<dbReference type="SUPFAM" id="SSF161111">
    <property type="entry name" value="Cation efflux protein transmembrane domain-like"/>
    <property type="match status" value="1"/>
</dbReference>
<comment type="function">
    <text evidence="1">Proton-coupled zinc ion antiporter mediating the entry of zinc into the lumen of pancreatic beta cell secretory granules, thereby regulating insulin secretion.</text>
</comment>
<comment type="catalytic activity">
    <reaction evidence="1">
        <text>Zn(2+)(in) + 2 H(+)(out) = Zn(2+)(out) + 2 H(+)(in)</text>
        <dbReference type="Rhea" id="RHEA:72627"/>
        <dbReference type="ChEBI" id="CHEBI:15378"/>
        <dbReference type="ChEBI" id="CHEBI:29105"/>
    </reaction>
</comment>
<comment type="subunit">
    <text evidence="1">Homodimer.</text>
</comment>
<comment type="subcellular location">
    <subcellularLocation>
        <location evidence="1">Cytoplasmic vesicle</location>
        <location evidence="1">Secretory vesicle membrane</location>
        <topology evidence="2">Multi-pass membrane protein</topology>
    </subcellularLocation>
    <subcellularLocation>
        <location evidence="1">Cell membrane</location>
        <topology evidence="2">Multi-pass membrane protein</topology>
    </subcellularLocation>
    <text evidence="1">Associated with insulin and glucagon secretory granules.</text>
</comment>
<comment type="miscellaneous">
    <text evidence="1">Each subunit of the homodimer independently transports zinc ions in a pH-dependent manner. The cytosolic pH promotes binding of zinc ions to the transporter binding site. Upon change into the organelle-facing conformation, the two histidines of the zinc-binding site get protonated at lumenal lower pH, triggering zinc release into the organelle. The transporter then moves back to the cytosolic-facing conformation where the two histidines get deprotonated at higher pH, resulting in a net antiport of 2 protons.</text>
</comment>
<comment type="similarity">
    <text evidence="4">Belongs to the cation diffusion facilitator (CDF) transporter (TC 2.A.4) family. SLC30A subfamily.</text>
</comment>
<protein>
    <recommendedName>
        <fullName evidence="4">Proton-coupled zinc antiporter SLC30A8</fullName>
    </recommendedName>
    <alternativeName>
        <fullName>Solute carrier family 30 member 8</fullName>
    </alternativeName>
    <alternativeName>
        <fullName>Zinc transporter 8</fullName>
        <shortName>ZnT-8</shortName>
    </alternativeName>
</protein>
<evidence type="ECO:0000250" key="1">
    <source>
        <dbReference type="UniProtKB" id="Q8IWU4"/>
    </source>
</evidence>
<evidence type="ECO:0000255" key="2"/>
<evidence type="ECO:0000256" key="3">
    <source>
        <dbReference type="SAM" id="MobiDB-lite"/>
    </source>
</evidence>
<evidence type="ECO:0000305" key="4"/>
<keyword id="KW-0002">3D-structure</keyword>
<keyword id="KW-0050">Antiport</keyword>
<keyword id="KW-1003">Cell membrane</keyword>
<keyword id="KW-0968">Cytoplasmic vesicle</keyword>
<keyword id="KW-0406">Ion transport</keyword>
<keyword id="KW-0472">Membrane</keyword>
<keyword id="KW-0479">Metal-binding</keyword>
<keyword id="KW-1185">Reference proteome</keyword>
<keyword id="KW-0812">Transmembrane</keyword>
<keyword id="KW-1133">Transmembrane helix</keyword>
<keyword id="KW-0813">Transport</keyword>
<keyword id="KW-0862">Zinc</keyword>
<keyword id="KW-0864">Zinc transport</keyword>
<proteinExistence type="evidence at protein level"/>
<organism>
    <name type="scientific">Xenopus tropicalis</name>
    <name type="common">Western clawed frog</name>
    <name type="synonym">Silurana tropicalis</name>
    <dbReference type="NCBI Taxonomy" id="8364"/>
    <lineage>
        <taxon>Eukaryota</taxon>
        <taxon>Metazoa</taxon>
        <taxon>Chordata</taxon>
        <taxon>Craniata</taxon>
        <taxon>Vertebrata</taxon>
        <taxon>Euteleostomi</taxon>
        <taxon>Amphibia</taxon>
        <taxon>Batrachia</taxon>
        <taxon>Anura</taxon>
        <taxon>Pipoidea</taxon>
        <taxon>Pipidae</taxon>
        <taxon>Xenopodinae</taxon>
        <taxon>Xenopus</taxon>
        <taxon>Silurana</taxon>
    </lineage>
</organism>
<reference key="1">
    <citation type="submission" date="2004-10" db="EMBL/GenBank/DDBJ databases">
        <authorList>
            <consortium name="NIH - Xenopus Gene Collection (XGC) project"/>
        </authorList>
    </citation>
    <scope>NUCLEOTIDE SEQUENCE [LARGE SCALE MRNA]</scope>
    <source>
        <tissue>Embryo</tissue>
    </source>
</reference>
<accession>Q5XHB4</accession>
<gene>
    <name type="primary">slc30a8</name>
</gene>
<name>ZNT8_XENTR</name>
<feature type="chain" id="PRO_0000281743" description="Proton-coupled zinc antiporter SLC30A8">
    <location>
        <begin position="1"/>
        <end position="374"/>
    </location>
</feature>
<feature type="topological domain" description="Cytoplasmic" evidence="1">
    <location>
        <begin position="1"/>
        <end position="67"/>
    </location>
</feature>
<feature type="transmembrane region" description="Helical" evidence="2">
    <location>
        <begin position="68"/>
        <end position="88"/>
    </location>
</feature>
<feature type="topological domain" description="Lumenal, vesicle" evidence="1">
    <location>
        <begin position="89"/>
        <end position="91"/>
    </location>
</feature>
<feature type="transmembrane region" description="Helical" evidence="2">
    <location>
        <begin position="92"/>
        <end position="112"/>
    </location>
</feature>
<feature type="topological domain" description="Cytoplasmic" evidence="1">
    <location>
        <begin position="113"/>
        <end position="134"/>
    </location>
</feature>
<feature type="transmembrane region" description="Helical" evidence="2">
    <location>
        <begin position="135"/>
        <end position="155"/>
    </location>
</feature>
<feature type="topological domain" description="Lumenal, vesicle" evidence="1">
    <location>
        <begin position="156"/>
        <end position="169"/>
    </location>
</feature>
<feature type="transmembrane region" description="Helical" evidence="2">
    <location>
        <begin position="170"/>
        <end position="190"/>
    </location>
</feature>
<feature type="topological domain" description="Cytoplasmic" evidence="1">
    <location>
        <begin position="191"/>
        <end position="222"/>
    </location>
</feature>
<feature type="transmembrane region" description="Helical" evidence="2">
    <location>
        <begin position="223"/>
        <end position="243"/>
    </location>
</feature>
<feature type="topological domain" description="Lumenal, vesicle" evidence="1">
    <location>
        <begin position="244"/>
        <end position="251"/>
    </location>
</feature>
<feature type="transmembrane region" description="Helical" evidence="2">
    <location>
        <begin position="252"/>
        <end position="272"/>
    </location>
</feature>
<feature type="topological domain" description="Cytoplasmic" evidence="1">
    <location>
        <begin position="273"/>
        <end position="374"/>
    </location>
</feature>
<feature type="region of interest" description="Disordered" evidence="3">
    <location>
        <begin position="18"/>
        <end position="48"/>
    </location>
</feature>
<feature type="short sequence motif" description="HCH Motif; seals regulatory zinc-binding pocket" evidence="1">
    <location>
        <begin position="45"/>
        <end position="47"/>
    </location>
</feature>
<feature type="binding site" description="in chain A" evidence="1">
    <location>
        <position position="45"/>
    </location>
    <ligand>
        <name>Zn(2+)</name>
        <dbReference type="ChEBI" id="CHEBI:29105"/>
        <label>3</label>
        <note>regulatory; ligand shared between homodimeric partners</note>
    </ligand>
</feature>
<feature type="binding site" description="in chain A" evidence="1">
    <location>
        <position position="46"/>
    </location>
    <ligand>
        <name>Zn(2+)</name>
        <dbReference type="ChEBI" id="CHEBI:29105"/>
        <label>2</label>
        <note>regulatory; ligand shared between homodimeric partners</note>
    </ligand>
</feature>
<feature type="binding site" description="in chain A" evidence="1">
    <location>
        <position position="47"/>
    </location>
    <ligand>
        <name>Zn(2+)</name>
        <dbReference type="ChEBI" id="CHEBI:29105"/>
        <label>3</label>
        <note>regulatory; ligand shared between homodimeric partners</note>
    </ligand>
</feature>
<feature type="binding site" evidence="1">
    <location>
        <position position="100"/>
    </location>
    <ligand>
        <name>Zn(2+)</name>
        <dbReference type="ChEBI" id="CHEBI:29105"/>
        <label>1</label>
        <note>transported zinc</note>
    </ligand>
</feature>
<feature type="binding site" evidence="1">
    <location>
        <position position="104"/>
    </location>
    <ligand>
        <name>Zn(2+)</name>
        <dbReference type="ChEBI" id="CHEBI:29105"/>
        <label>1</label>
        <note>transported zinc</note>
    </ligand>
</feature>
<feature type="binding site" evidence="1">
    <location>
        <position position="131"/>
    </location>
    <ligand>
        <name>Zn(2+)</name>
        <dbReference type="ChEBI" id="CHEBI:29105"/>
        <label>4</label>
        <note>low affinity</note>
    </ligand>
</feature>
<feature type="binding site" evidence="1">
    <location>
        <position position="225"/>
    </location>
    <ligand>
        <name>Zn(2+)</name>
        <dbReference type="ChEBI" id="CHEBI:29105"/>
        <label>1</label>
        <note>transported zinc</note>
    </ligand>
</feature>
<feature type="binding site" evidence="1">
    <location>
        <position position="229"/>
    </location>
    <ligand>
        <name>Zn(2+)</name>
        <dbReference type="ChEBI" id="CHEBI:29105"/>
        <label>1</label>
        <note>transported zinc</note>
    </ligand>
</feature>
<feature type="binding site" description="in chain B" evidence="1">
    <location>
        <position position="306"/>
    </location>
    <ligand>
        <name>Zn(2+)</name>
        <dbReference type="ChEBI" id="CHEBI:29105"/>
        <label>2</label>
        <note>regulatory; ligand shared between homodimeric partners</note>
    </ligand>
</feature>
<feature type="binding site" description="in chain B" evidence="1">
    <location>
        <position position="323"/>
    </location>
    <ligand>
        <name>Zn(2+)</name>
        <dbReference type="ChEBI" id="CHEBI:29105"/>
        <label>2</label>
        <note>regulatory; ligand shared between homodimeric partners</note>
    </ligand>
</feature>
<feature type="binding site" evidence="1">
    <location>
        <position position="350"/>
    </location>
    <ligand>
        <name>Zn(2+)</name>
        <dbReference type="ChEBI" id="CHEBI:29105"/>
        <label>4</label>
        <note>low affinity</note>
    </ligand>
</feature>
<feature type="binding site" description="in chain B" evidence="1">
    <location>
        <position position="357"/>
    </location>
    <ligand>
        <name>Zn(2+)</name>
        <dbReference type="ChEBI" id="CHEBI:29105"/>
        <label>2</label>
        <note>regulatory; ligand shared between homodimeric partners</note>
    </ligand>
</feature>
<feature type="binding site" description="in chain B" evidence="1">
    <location>
        <position position="366"/>
    </location>
    <ligand>
        <name>Zn(2+)</name>
        <dbReference type="ChEBI" id="CHEBI:29105"/>
        <label>3</label>
        <note>regulatory; ligand shared between homodimeric partners</note>
    </ligand>
</feature>
<feature type="binding site" description="in chain B" evidence="1">
    <location>
        <position position="369"/>
    </location>
    <ligand>
        <name>Zn(2+)</name>
        <dbReference type="ChEBI" id="CHEBI:29105"/>
        <label>3</label>
        <note>regulatory; ligand shared between homodimeric partners</note>
    </ligand>
</feature>
<sequence length="374" mass="41490">MKGSEEAYLVSDKATKMYSLTKDSEKNHPSKPPLQDEENPQSKYHCHNNNKKAYDARQREQTFAKKKLCIASLICFVFISAEIVGGYIAGSLAVVTDAAHLLVDLSSFFISLCSLWLSSKSSTTRLTFGWHRAEILGALMSVITIWLVTGVLVYLACERLIRPDYTIDGTVMLITSACALGANLVLALILHQSGHGHSHAGGKHEHMASEYKPQTNASIRAAFIHVIGDLFQSISVLISALIIYFKPEYKMADPICTFIFSIFVLITTVTVLRDLLTVLMEGTPRGIHYSDVKQSILAVDGVKSVHSLHLWALTMNQVILSAHIATDIVGESKRILKDVTQNVFARFPFHSVTIQVEPIEDQSPECMFCYEPTQ</sequence>